<dbReference type="EC" id="2.7.7.-" evidence="1"/>
<dbReference type="EC" id="2.7.7.108" evidence="1"/>
<dbReference type="EMBL" id="CP000668">
    <property type="protein sequence ID" value="ABP39143.1"/>
    <property type="molecule type" value="Genomic_DNA"/>
</dbReference>
<dbReference type="RefSeq" id="WP_011192539.1">
    <property type="nucleotide sequence ID" value="NZ_CP009715.1"/>
</dbReference>
<dbReference type="SMR" id="A4TIN1"/>
<dbReference type="KEGG" id="ypp:YPDSF_0737"/>
<dbReference type="GO" id="GO:0070733">
    <property type="term" value="F:AMPylase activity"/>
    <property type="evidence" value="ECO:0007669"/>
    <property type="project" value="RHEA"/>
</dbReference>
<dbReference type="GO" id="GO:0005524">
    <property type="term" value="F:ATP binding"/>
    <property type="evidence" value="ECO:0007669"/>
    <property type="project" value="UniProtKB-UniRule"/>
</dbReference>
<dbReference type="GO" id="GO:0000287">
    <property type="term" value="F:magnesium ion binding"/>
    <property type="evidence" value="ECO:0007669"/>
    <property type="project" value="UniProtKB-UniRule"/>
</dbReference>
<dbReference type="HAMAP" id="MF_00692">
    <property type="entry name" value="YdiU_SelO"/>
    <property type="match status" value="1"/>
</dbReference>
<dbReference type="InterPro" id="IPR003846">
    <property type="entry name" value="SelO"/>
</dbReference>
<dbReference type="NCBIfam" id="NF000658">
    <property type="entry name" value="PRK00029.1"/>
    <property type="match status" value="1"/>
</dbReference>
<dbReference type="PANTHER" id="PTHR32057">
    <property type="entry name" value="PROTEIN ADENYLYLTRANSFERASE SELO, MITOCHONDRIAL"/>
    <property type="match status" value="1"/>
</dbReference>
<dbReference type="PANTHER" id="PTHR32057:SF14">
    <property type="entry name" value="PROTEIN ADENYLYLTRANSFERASE SELO, MITOCHONDRIAL"/>
    <property type="match status" value="1"/>
</dbReference>
<dbReference type="Pfam" id="PF02696">
    <property type="entry name" value="SelO"/>
    <property type="match status" value="1"/>
</dbReference>
<sequence>MKPRMEYAPEFDNSYARQLSGFYTRLQPTPLKGARLLYHSKPLAQELGLDAHWFTEPKTAVWAGEALLPGMEPLAQVYSGHQFGMWAGQLGDGRGILLGEQRLNDGRYMDWHLKGAGLTPYSRMGDGRAVLRSVIREFLASEALHHLGIPTSRALTIVTSDHPIYREQTERGAMLLRVAESHIRFGHFEHFYYRQQPKQVQQLADYVIARHWPQWVGHQECYRLWFTDVVERTARLMAHWQTVGFAHGVMNTDNMSILGITMDYGPFGFLDDYVPGYICNHSDHQGRYAYDNQPAVALWNLHRLGHALSGLMSADQLQLALEAYEPALMVAYGEQMRAKLGFLERDSQDNDLLTGLLSLMIKEGRDYTRTFRLLSEVEVHSAQSPLRDDFIDRAAFDDWYRRYRSRLQQESIDDDQRQQSMKAANPKYILRNYLAQQAITQAEKDDIQPLQRLHQALQQPFTDQPEFDDLAALPPDWGKHLEISCSS</sequence>
<protein>
    <recommendedName>
        <fullName evidence="1">Protein nucleotidyltransferase YdiU</fullName>
        <ecNumber evidence="1">2.7.7.-</ecNumber>
    </recommendedName>
    <alternativeName>
        <fullName evidence="1">Protein adenylyltransferase YdiU</fullName>
        <ecNumber evidence="1">2.7.7.108</ecNumber>
    </alternativeName>
    <alternativeName>
        <fullName evidence="1">Protein uridylyltransferase YdiU</fullName>
        <ecNumber evidence="1">2.7.7.-</ecNumber>
    </alternativeName>
</protein>
<accession>A4TIN1</accession>
<evidence type="ECO:0000255" key="1">
    <source>
        <dbReference type="HAMAP-Rule" id="MF_00692"/>
    </source>
</evidence>
<reference key="1">
    <citation type="submission" date="2007-02" db="EMBL/GenBank/DDBJ databases">
        <title>Complete sequence of chromosome of Yersinia pestis Pestoides F.</title>
        <authorList>
            <consortium name="US DOE Joint Genome Institute"/>
            <person name="Copeland A."/>
            <person name="Lucas S."/>
            <person name="Lapidus A."/>
            <person name="Barry K."/>
            <person name="Detter J.C."/>
            <person name="Glavina del Rio T."/>
            <person name="Hammon N."/>
            <person name="Israni S."/>
            <person name="Dalin E."/>
            <person name="Tice H."/>
            <person name="Pitluck S."/>
            <person name="Di Bartolo G."/>
            <person name="Chain P."/>
            <person name="Malfatti S."/>
            <person name="Shin M."/>
            <person name="Vergez L."/>
            <person name="Schmutz J."/>
            <person name="Larimer F."/>
            <person name="Land M."/>
            <person name="Hauser L."/>
            <person name="Worsham P."/>
            <person name="Chu M."/>
            <person name="Bearden S."/>
            <person name="Garcia E."/>
            <person name="Richardson P."/>
        </authorList>
    </citation>
    <scope>NUCLEOTIDE SEQUENCE [LARGE SCALE GENOMIC DNA]</scope>
    <source>
        <strain>Pestoides F</strain>
    </source>
</reference>
<name>SELO_YERPP</name>
<keyword id="KW-0067">ATP-binding</keyword>
<keyword id="KW-0460">Magnesium</keyword>
<keyword id="KW-0464">Manganese</keyword>
<keyword id="KW-0479">Metal-binding</keyword>
<keyword id="KW-0547">Nucleotide-binding</keyword>
<keyword id="KW-0548">Nucleotidyltransferase</keyword>
<keyword id="KW-0808">Transferase</keyword>
<gene>
    <name evidence="1" type="primary">ydiU</name>
    <name evidence="1" type="synonym">selO</name>
    <name type="ordered locus">YPDSF_0737</name>
</gene>
<comment type="function">
    <text evidence="1">Nucleotidyltransferase involved in the post-translational modification of proteins. It can catalyze the addition of adenosine monophosphate (AMP) or uridine monophosphate (UMP) to a protein, resulting in modifications known as AMPylation and UMPylation.</text>
</comment>
<comment type="catalytic activity">
    <reaction evidence="1">
        <text>L-seryl-[protein] + ATP = 3-O-(5'-adenylyl)-L-seryl-[protein] + diphosphate</text>
        <dbReference type="Rhea" id="RHEA:58120"/>
        <dbReference type="Rhea" id="RHEA-COMP:9863"/>
        <dbReference type="Rhea" id="RHEA-COMP:15073"/>
        <dbReference type="ChEBI" id="CHEBI:29999"/>
        <dbReference type="ChEBI" id="CHEBI:30616"/>
        <dbReference type="ChEBI" id="CHEBI:33019"/>
        <dbReference type="ChEBI" id="CHEBI:142516"/>
        <dbReference type="EC" id="2.7.7.108"/>
    </reaction>
</comment>
<comment type="catalytic activity">
    <reaction evidence="1">
        <text>L-threonyl-[protein] + ATP = 3-O-(5'-adenylyl)-L-threonyl-[protein] + diphosphate</text>
        <dbReference type="Rhea" id="RHEA:54292"/>
        <dbReference type="Rhea" id="RHEA-COMP:11060"/>
        <dbReference type="Rhea" id="RHEA-COMP:13847"/>
        <dbReference type="ChEBI" id="CHEBI:30013"/>
        <dbReference type="ChEBI" id="CHEBI:30616"/>
        <dbReference type="ChEBI" id="CHEBI:33019"/>
        <dbReference type="ChEBI" id="CHEBI:138113"/>
        <dbReference type="EC" id="2.7.7.108"/>
    </reaction>
</comment>
<comment type="catalytic activity">
    <reaction evidence="1">
        <text>L-tyrosyl-[protein] + ATP = O-(5'-adenylyl)-L-tyrosyl-[protein] + diphosphate</text>
        <dbReference type="Rhea" id="RHEA:54288"/>
        <dbReference type="Rhea" id="RHEA-COMP:10136"/>
        <dbReference type="Rhea" id="RHEA-COMP:13846"/>
        <dbReference type="ChEBI" id="CHEBI:30616"/>
        <dbReference type="ChEBI" id="CHEBI:33019"/>
        <dbReference type="ChEBI" id="CHEBI:46858"/>
        <dbReference type="ChEBI" id="CHEBI:83624"/>
        <dbReference type="EC" id="2.7.7.108"/>
    </reaction>
</comment>
<comment type="catalytic activity">
    <reaction evidence="1">
        <text>L-histidyl-[protein] + UTP = N(tele)-(5'-uridylyl)-L-histidyl-[protein] + diphosphate</text>
        <dbReference type="Rhea" id="RHEA:83891"/>
        <dbReference type="Rhea" id="RHEA-COMP:9745"/>
        <dbReference type="Rhea" id="RHEA-COMP:20239"/>
        <dbReference type="ChEBI" id="CHEBI:29979"/>
        <dbReference type="ChEBI" id="CHEBI:33019"/>
        <dbReference type="ChEBI" id="CHEBI:46398"/>
        <dbReference type="ChEBI" id="CHEBI:233474"/>
    </reaction>
</comment>
<comment type="catalytic activity">
    <reaction evidence="1">
        <text>L-seryl-[protein] + UTP = O-(5'-uridylyl)-L-seryl-[protein] + diphosphate</text>
        <dbReference type="Rhea" id="RHEA:64604"/>
        <dbReference type="Rhea" id="RHEA-COMP:9863"/>
        <dbReference type="Rhea" id="RHEA-COMP:16635"/>
        <dbReference type="ChEBI" id="CHEBI:29999"/>
        <dbReference type="ChEBI" id="CHEBI:33019"/>
        <dbReference type="ChEBI" id="CHEBI:46398"/>
        <dbReference type="ChEBI" id="CHEBI:156051"/>
    </reaction>
</comment>
<comment type="catalytic activity">
    <reaction evidence="1">
        <text>L-tyrosyl-[protein] + UTP = O-(5'-uridylyl)-L-tyrosyl-[protein] + diphosphate</text>
        <dbReference type="Rhea" id="RHEA:83887"/>
        <dbReference type="Rhea" id="RHEA-COMP:10136"/>
        <dbReference type="Rhea" id="RHEA-COMP:20238"/>
        <dbReference type="ChEBI" id="CHEBI:33019"/>
        <dbReference type="ChEBI" id="CHEBI:46398"/>
        <dbReference type="ChEBI" id="CHEBI:46858"/>
        <dbReference type="ChEBI" id="CHEBI:90602"/>
    </reaction>
</comment>
<comment type="cofactor">
    <cofactor evidence="1">
        <name>Mg(2+)</name>
        <dbReference type="ChEBI" id="CHEBI:18420"/>
    </cofactor>
    <cofactor evidence="1">
        <name>Mn(2+)</name>
        <dbReference type="ChEBI" id="CHEBI:29035"/>
    </cofactor>
</comment>
<comment type="similarity">
    <text evidence="1">Belongs to the SELO family.</text>
</comment>
<feature type="chain" id="PRO_1000045263" description="Protein nucleotidyltransferase YdiU">
    <location>
        <begin position="1"/>
        <end position="487"/>
    </location>
</feature>
<feature type="active site" description="Proton acceptor" evidence="1">
    <location>
        <position position="253"/>
    </location>
</feature>
<feature type="binding site" evidence="1">
    <location>
        <position position="91"/>
    </location>
    <ligand>
        <name>ATP</name>
        <dbReference type="ChEBI" id="CHEBI:30616"/>
    </ligand>
</feature>
<feature type="binding site" evidence="1">
    <location>
        <position position="93"/>
    </location>
    <ligand>
        <name>ATP</name>
        <dbReference type="ChEBI" id="CHEBI:30616"/>
    </ligand>
</feature>
<feature type="binding site" evidence="1">
    <location>
        <position position="94"/>
    </location>
    <ligand>
        <name>ATP</name>
        <dbReference type="ChEBI" id="CHEBI:30616"/>
    </ligand>
</feature>
<feature type="binding site" evidence="1">
    <location>
        <position position="114"/>
    </location>
    <ligand>
        <name>ATP</name>
        <dbReference type="ChEBI" id="CHEBI:30616"/>
    </ligand>
</feature>
<feature type="binding site" evidence="1">
    <location>
        <position position="126"/>
    </location>
    <ligand>
        <name>ATP</name>
        <dbReference type="ChEBI" id="CHEBI:30616"/>
    </ligand>
</feature>
<feature type="binding site" evidence="1">
    <location>
        <position position="127"/>
    </location>
    <ligand>
        <name>ATP</name>
        <dbReference type="ChEBI" id="CHEBI:30616"/>
    </ligand>
</feature>
<feature type="binding site" evidence="1">
    <location>
        <position position="177"/>
    </location>
    <ligand>
        <name>ATP</name>
        <dbReference type="ChEBI" id="CHEBI:30616"/>
    </ligand>
</feature>
<feature type="binding site" evidence="1">
    <location>
        <position position="184"/>
    </location>
    <ligand>
        <name>ATP</name>
        <dbReference type="ChEBI" id="CHEBI:30616"/>
    </ligand>
</feature>
<feature type="binding site" evidence="1">
    <location>
        <position position="254"/>
    </location>
    <ligand>
        <name>Mg(2+)</name>
        <dbReference type="ChEBI" id="CHEBI:18420"/>
    </ligand>
</feature>
<feature type="binding site" evidence="1">
    <location>
        <position position="263"/>
    </location>
    <ligand>
        <name>ATP</name>
        <dbReference type="ChEBI" id="CHEBI:30616"/>
    </ligand>
</feature>
<feature type="binding site" evidence="1">
    <location>
        <position position="263"/>
    </location>
    <ligand>
        <name>Mg(2+)</name>
        <dbReference type="ChEBI" id="CHEBI:18420"/>
    </ligand>
</feature>
<proteinExistence type="inferred from homology"/>
<organism>
    <name type="scientific">Yersinia pestis (strain Pestoides F)</name>
    <dbReference type="NCBI Taxonomy" id="386656"/>
    <lineage>
        <taxon>Bacteria</taxon>
        <taxon>Pseudomonadati</taxon>
        <taxon>Pseudomonadota</taxon>
        <taxon>Gammaproteobacteria</taxon>
        <taxon>Enterobacterales</taxon>
        <taxon>Yersiniaceae</taxon>
        <taxon>Yersinia</taxon>
    </lineage>
</organism>